<organism>
    <name type="scientific">Legionella pneumophila subsp. pneumophila (strain Philadelphia 1 / ATCC 33152 / DSM 7513)</name>
    <dbReference type="NCBI Taxonomy" id="272624"/>
    <lineage>
        <taxon>Bacteria</taxon>
        <taxon>Pseudomonadati</taxon>
        <taxon>Pseudomonadota</taxon>
        <taxon>Gammaproteobacteria</taxon>
        <taxon>Legionellales</taxon>
        <taxon>Legionellaceae</taxon>
        <taxon>Legionella</taxon>
    </lineage>
</organism>
<reference key="1">
    <citation type="journal article" date="2004" name="Science">
        <title>The genomic sequence of the accidental pathogen Legionella pneumophila.</title>
        <authorList>
            <person name="Chien M."/>
            <person name="Morozova I."/>
            <person name="Shi S."/>
            <person name="Sheng H."/>
            <person name="Chen J."/>
            <person name="Gomez S.M."/>
            <person name="Asamani G."/>
            <person name="Hill K."/>
            <person name="Nuara J."/>
            <person name="Feder M."/>
            <person name="Rineer J."/>
            <person name="Greenberg J.J."/>
            <person name="Steshenko V."/>
            <person name="Park S.H."/>
            <person name="Zhao B."/>
            <person name="Teplitskaya E."/>
            <person name="Edwards J.R."/>
            <person name="Pampou S."/>
            <person name="Georghiou A."/>
            <person name="Chou I.-C."/>
            <person name="Iannuccilli W."/>
            <person name="Ulz M.E."/>
            <person name="Kim D.H."/>
            <person name="Geringer-Sameth A."/>
            <person name="Goldsberry C."/>
            <person name="Morozov P."/>
            <person name="Fischer S.G."/>
            <person name="Segal G."/>
            <person name="Qu X."/>
            <person name="Rzhetsky A."/>
            <person name="Zhang P."/>
            <person name="Cayanis E."/>
            <person name="De Jong P.J."/>
            <person name="Ju J."/>
            <person name="Kalachikov S."/>
            <person name="Shuman H.A."/>
            <person name="Russo J.J."/>
        </authorList>
    </citation>
    <scope>NUCLEOTIDE SEQUENCE [LARGE SCALE GENOMIC DNA]</scope>
    <source>
        <strain>Philadelphia 1 / ATCC 33152 / DSM 7513</strain>
    </source>
</reference>
<feature type="chain" id="PRO_0000325660" description="Uroporphyrinogen decarboxylase">
    <location>
        <begin position="1"/>
        <end position="352"/>
    </location>
</feature>
<feature type="binding site" evidence="1">
    <location>
        <begin position="27"/>
        <end position="31"/>
    </location>
    <ligand>
        <name>substrate</name>
    </ligand>
</feature>
<feature type="binding site" evidence="1">
    <location>
        <position position="77"/>
    </location>
    <ligand>
        <name>substrate</name>
    </ligand>
</feature>
<feature type="binding site" evidence="1">
    <location>
        <position position="154"/>
    </location>
    <ligand>
        <name>substrate</name>
    </ligand>
</feature>
<feature type="binding site" evidence="1">
    <location>
        <position position="209"/>
    </location>
    <ligand>
        <name>substrate</name>
    </ligand>
</feature>
<feature type="binding site" evidence="1">
    <location>
        <position position="325"/>
    </location>
    <ligand>
        <name>substrate</name>
    </ligand>
</feature>
<feature type="site" description="Transition state stabilizer" evidence="1">
    <location>
        <position position="77"/>
    </location>
</feature>
<dbReference type="EC" id="4.1.1.37" evidence="1"/>
<dbReference type="EMBL" id="AE017354">
    <property type="protein sequence ID" value="AAU28097.1"/>
    <property type="status" value="ALT_INIT"/>
    <property type="molecule type" value="Genomic_DNA"/>
</dbReference>
<dbReference type="RefSeq" id="WP_015444333.1">
    <property type="nucleotide sequence ID" value="NC_002942.5"/>
</dbReference>
<dbReference type="RefSeq" id="YP_096044.1">
    <property type="nucleotide sequence ID" value="NC_002942.5"/>
</dbReference>
<dbReference type="SMR" id="Q5ZTY0"/>
<dbReference type="STRING" id="272624.lpg2028"/>
<dbReference type="PaxDb" id="272624-lpg2028"/>
<dbReference type="GeneID" id="57036022"/>
<dbReference type="KEGG" id="lpn:lpg2028"/>
<dbReference type="PATRIC" id="fig|272624.6.peg.2124"/>
<dbReference type="eggNOG" id="COG0407">
    <property type="taxonomic scope" value="Bacteria"/>
</dbReference>
<dbReference type="HOGENOM" id="CLU_040933_0_0_6"/>
<dbReference type="OrthoDB" id="9806656at2"/>
<dbReference type="UniPathway" id="UPA00251">
    <property type="reaction ID" value="UER00321"/>
</dbReference>
<dbReference type="Proteomes" id="UP000000609">
    <property type="component" value="Chromosome"/>
</dbReference>
<dbReference type="GO" id="GO:0005829">
    <property type="term" value="C:cytosol"/>
    <property type="evidence" value="ECO:0007669"/>
    <property type="project" value="TreeGrafter"/>
</dbReference>
<dbReference type="GO" id="GO:0004853">
    <property type="term" value="F:uroporphyrinogen decarboxylase activity"/>
    <property type="evidence" value="ECO:0007669"/>
    <property type="project" value="UniProtKB-UniRule"/>
</dbReference>
<dbReference type="GO" id="GO:0019353">
    <property type="term" value="P:protoporphyrinogen IX biosynthetic process from glutamate"/>
    <property type="evidence" value="ECO:0007669"/>
    <property type="project" value="TreeGrafter"/>
</dbReference>
<dbReference type="CDD" id="cd00717">
    <property type="entry name" value="URO-D"/>
    <property type="match status" value="1"/>
</dbReference>
<dbReference type="FunFam" id="3.20.20.210:FF:000001">
    <property type="entry name" value="Uroporphyrinogen decarboxylase"/>
    <property type="match status" value="1"/>
</dbReference>
<dbReference type="Gene3D" id="3.20.20.210">
    <property type="match status" value="1"/>
</dbReference>
<dbReference type="HAMAP" id="MF_00218">
    <property type="entry name" value="URO_D"/>
    <property type="match status" value="1"/>
</dbReference>
<dbReference type="InterPro" id="IPR038071">
    <property type="entry name" value="UROD/MetE-like_sf"/>
</dbReference>
<dbReference type="InterPro" id="IPR006361">
    <property type="entry name" value="Uroporphyrinogen_deCO2ase_HemE"/>
</dbReference>
<dbReference type="InterPro" id="IPR000257">
    <property type="entry name" value="Uroporphyrinogen_deCOase"/>
</dbReference>
<dbReference type="NCBIfam" id="TIGR01464">
    <property type="entry name" value="hemE"/>
    <property type="match status" value="1"/>
</dbReference>
<dbReference type="PANTHER" id="PTHR21091">
    <property type="entry name" value="METHYLTETRAHYDROFOLATE:HOMOCYSTEINE METHYLTRANSFERASE RELATED"/>
    <property type="match status" value="1"/>
</dbReference>
<dbReference type="PANTHER" id="PTHR21091:SF169">
    <property type="entry name" value="UROPORPHYRINOGEN DECARBOXYLASE"/>
    <property type="match status" value="1"/>
</dbReference>
<dbReference type="Pfam" id="PF01208">
    <property type="entry name" value="URO-D"/>
    <property type="match status" value="1"/>
</dbReference>
<dbReference type="SUPFAM" id="SSF51726">
    <property type="entry name" value="UROD/MetE-like"/>
    <property type="match status" value="1"/>
</dbReference>
<dbReference type="PROSITE" id="PS00906">
    <property type="entry name" value="UROD_1"/>
    <property type="match status" value="1"/>
</dbReference>
<dbReference type="PROSITE" id="PS00907">
    <property type="entry name" value="UROD_2"/>
    <property type="match status" value="1"/>
</dbReference>
<accession>Q5ZTY0</accession>
<sequence>MFDLNQSLFLRALRRQPVERTPIWIMRQAGRYLPEYRKVREHAGDFLNLCKNPELACEVTLQPLRRYALDAAILFSDILTIPDAMGLGLYFAEGEGPRFTNPLQDTKAIHTLKIPSIPESLSYVFDAARLIRQEMPKELPLIGFSGSPWTLACYMVEGGSSRDFKRILNLIYTEKEAAHLLLNKLAVSVTAYLIEQIKAGVNAVMIFDTWGGVLTPQNYKDFSLAYMHQIVQQLKKEYPDIPVILFTKNGGQWLEWMAETGCDALGVDWTCDLASARKRVGGKVALQGNLDPAVLLTTKNCIRSEVGSVLASYGYGTGHIFNLGHGITPDVPPENVAIMIEAVHEISPQYHL</sequence>
<gene>
    <name evidence="1" type="primary">hemE</name>
    <name type="ordered locus">lpg2028</name>
</gene>
<evidence type="ECO:0000255" key="1">
    <source>
        <dbReference type="HAMAP-Rule" id="MF_00218"/>
    </source>
</evidence>
<evidence type="ECO:0000305" key="2"/>
<name>DCUP_LEGPH</name>
<proteinExistence type="inferred from homology"/>
<protein>
    <recommendedName>
        <fullName evidence="1">Uroporphyrinogen decarboxylase</fullName>
        <shortName evidence="1">UPD</shortName>
        <shortName evidence="1">URO-D</shortName>
        <ecNumber evidence="1">4.1.1.37</ecNumber>
    </recommendedName>
</protein>
<keyword id="KW-0963">Cytoplasm</keyword>
<keyword id="KW-0210">Decarboxylase</keyword>
<keyword id="KW-0456">Lyase</keyword>
<keyword id="KW-0627">Porphyrin biosynthesis</keyword>
<keyword id="KW-1185">Reference proteome</keyword>
<comment type="function">
    <text evidence="1">Catalyzes the decarboxylation of four acetate groups of uroporphyrinogen-III to yield coproporphyrinogen-III.</text>
</comment>
<comment type="catalytic activity">
    <reaction evidence="1">
        <text>uroporphyrinogen III + 4 H(+) = coproporphyrinogen III + 4 CO2</text>
        <dbReference type="Rhea" id="RHEA:19865"/>
        <dbReference type="ChEBI" id="CHEBI:15378"/>
        <dbReference type="ChEBI" id="CHEBI:16526"/>
        <dbReference type="ChEBI" id="CHEBI:57308"/>
        <dbReference type="ChEBI" id="CHEBI:57309"/>
        <dbReference type="EC" id="4.1.1.37"/>
    </reaction>
</comment>
<comment type="pathway">
    <text evidence="1">Porphyrin-containing compound metabolism; protoporphyrin-IX biosynthesis; coproporphyrinogen-III from 5-aminolevulinate: step 4/4.</text>
</comment>
<comment type="subunit">
    <text evidence="1">Homodimer.</text>
</comment>
<comment type="subcellular location">
    <subcellularLocation>
        <location evidence="1">Cytoplasm</location>
    </subcellularLocation>
</comment>
<comment type="similarity">
    <text evidence="1">Belongs to the uroporphyrinogen decarboxylase family.</text>
</comment>
<comment type="sequence caution" evidence="2">
    <conflict type="erroneous initiation">
        <sequence resource="EMBL-CDS" id="AAU28097"/>
    </conflict>
</comment>